<organism>
    <name type="scientific">Conus marmoreus</name>
    <name type="common">Marble cone</name>
    <dbReference type="NCBI Taxonomy" id="42752"/>
    <lineage>
        <taxon>Eukaryota</taxon>
        <taxon>Metazoa</taxon>
        <taxon>Spiralia</taxon>
        <taxon>Lophotrochozoa</taxon>
        <taxon>Mollusca</taxon>
        <taxon>Gastropoda</taxon>
        <taxon>Caenogastropoda</taxon>
        <taxon>Neogastropoda</taxon>
        <taxon>Conoidea</taxon>
        <taxon>Conidae</taxon>
        <taxon>Conus</taxon>
    </lineage>
</organism>
<protein>
    <recommendedName>
        <fullName evidence="5 6">Glacontryphan-M</fullName>
    </recommendedName>
</protein>
<comment type="function">
    <text evidence="3">Inhibits high (L-type) voltage-activated calcium channels (Cav) in a calcium-dependent manner.</text>
</comment>
<comment type="subcellular location">
    <subcellularLocation>
        <location evidence="3">Secreted</location>
    </subcellularLocation>
</comment>
<comment type="tissue specificity">
    <text evidence="8">Expressed by the venom duct.</text>
</comment>
<comment type="domain">
    <text evidence="7">The cysteine framework is C-C.</text>
</comment>
<comment type="mass spectrometry"/>
<comment type="miscellaneous">
    <text evidence="4">In contrast to the other contryphans, glacontryphan-M is a single homogenous conformer exhibiting no cis to trans isomerization of the Cys-Pro peptidyl bond in aqueous solution.</text>
</comment>
<comment type="similarity">
    <text evidence="7">Belongs to the O2 superfamily. Contryphan family.</text>
</comment>
<feature type="signal peptide" evidence="1">
    <location>
        <begin position="1"/>
        <end position="23"/>
    </location>
</feature>
<feature type="propeptide" id="PRO_0000035066" evidence="3">
    <location>
        <begin position="24"/>
        <end position="51"/>
    </location>
</feature>
<feature type="peptide" id="PRO_0000035067" description="Glacontryphan-M" evidence="3">
    <location>
        <begin position="52"/>
        <end position="62"/>
    </location>
</feature>
<feature type="region of interest" description="Disordered" evidence="2">
    <location>
        <begin position="23"/>
        <end position="48"/>
    </location>
</feature>
<feature type="compositionally biased region" description="Basic and acidic residues" evidence="2">
    <location>
        <begin position="23"/>
        <end position="41"/>
    </location>
</feature>
<feature type="binding site" description="via 4-carboxyglutamate" evidence="4">
    <location>
        <position position="53"/>
    </location>
    <ligand>
        <name>Ca(2+)</name>
        <dbReference type="ChEBI" id="CHEBI:29108"/>
    </ligand>
</feature>
<feature type="binding site" description="via 4-carboxyglutamate" evidence="4">
    <location>
        <position position="55"/>
    </location>
    <ligand>
        <name>Ca(2+)</name>
        <dbReference type="ChEBI" id="CHEBI:29108"/>
    </ligand>
</feature>
<feature type="modified residue" description="4-carboxyglutamate" evidence="3">
    <location>
        <position position="53"/>
    </location>
</feature>
<feature type="modified residue" description="4-carboxyglutamate" evidence="3">
    <location>
        <position position="55"/>
    </location>
</feature>
<feature type="modified residue" description="D-tryptophan" evidence="3">
    <location>
        <position position="58"/>
    </location>
</feature>
<feature type="modified residue" description="Cysteine amide" evidence="3">
    <location>
        <position position="62"/>
    </location>
</feature>
<feature type="disulfide bond" evidence="4">
    <location>
        <begin position="56"/>
        <end position="62"/>
    </location>
</feature>
<proteinExistence type="evidence at protein level"/>
<name>COW_CONMR</name>
<accession>P62903</accession>
<dbReference type="EMBL" id="AY485226">
    <property type="protein sequence ID" value="AAS48587.1"/>
    <property type="molecule type" value="mRNA"/>
</dbReference>
<dbReference type="ConoServer" id="1357">
    <property type="toxin name" value="contryphan-M precursor"/>
</dbReference>
<dbReference type="GO" id="GO:0005576">
    <property type="term" value="C:extracellular region"/>
    <property type="evidence" value="ECO:0007669"/>
    <property type="project" value="UniProtKB-SubCell"/>
</dbReference>
<dbReference type="GO" id="GO:0005246">
    <property type="term" value="F:calcium channel regulator activity"/>
    <property type="evidence" value="ECO:0007669"/>
    <property type="project" value="UniProtKB-KW"/>
</dbReference>
<dbReference type="GO" id="GO:0008200">
    <property type="term" value="F:ion channel inhibitor activity"/>
    <property type="evidence" value="ECO:0007669"/>
    <property type="project" value="InterPro"/>
</dbReference>
<dbReference type="GO" id="GO:0046872">
    <property type="term" value="F:metal ion binding"/>
    <property type="evidence" value="ECO:0007669"/>
    <property type="project" value="UniProtKB-KW"/>
</dbReference>
<dbReference type="GO" id="GO:0090729">
    <property type="term" value="F:toxin activity"/>
    <property type="evidence" value="ECO:0007669"/>
    <property type="project" value="UniProtKB-KW"/>
</dbReference>
<dbReference type="InterPro" id="IPR004214">
    <property type="entry name" value="Conotoxin"/>
</dbReference>
<dbReference type="InterPro" id="IPR011062">
    <property type="entry name" value="Contryphan_CS"/>
</dbReference>
<dbReference type="Pfam" id="PF02950">
    <property type="entry name" value="Conotoxin"/>
    <property type="match status" value="1"/>
</dbReference>
<dbReference type="PROSITE" id="PS60027">
    <property type="entry name" value="CONTRYPHAN"/>
    <property type="match status" value="1"/>
</dbReference>
<reference key="1">
    <citation type="journal article" date="2004" name="J. Biol. Chem.">
        <title>The first gamma-carboxyglutamic acid-containing contryphan. A selective L-type calcium ion channel blocker isolated from the venom of Conus marmoreus.</title>
        <authorList>
            <person name="Hansson K."/>
            <person name="Ma X."/>
            <person name="Eliasson L."/>
            <person name="Czerwiec E."/>
            <person name="Furie B."/>
            <person name="Furie B.C."/>
            <person name="Rorsman P."/>
            <person name="Stenflo J."/>
        </authorList>
    </citation>
    <scope>NUCLEOTIDE SEQUENCE [MRNA]</scope>
    <scope>PROTEIN SEQUENCE OF 52-62</scope>
    <scope>FUNCTION</scope>
    <scope>GAMMA-CARBOXYGLUTAMATION AT GLU-53 AND GLU-55</scope>
    <scope>D-AMINO ACID AT TRP-58</scope>
    <scope>AMIDATION AT CYS-62</scope>
    <scope>MASS SPECTROMETRY</scope>
    <scope>SYNTHESIS OF 52-62</scope>
    <scope>SUBCELLULAR LOCATION</scope>
    <source>
        <tissue>Venom</tissue>
        <tissue>Venom duct</tissue>
    </source>
</reference>
<reference key="2">
    <citation type="journal article" date="2004" name="J. Biol. Chem.">
        <title>The metal-free and calcium-bound structures of a gamma-carboxyglutamic acid-containing contryphan from Conus marmoreus, glacontryphan-M.</title>
        <authorList>
            <person name="Grant M.A."/>
            <person name="Hansson K."/>
            <person name="Furie B.C."/>
            <person name="Furie B."/>
            <person name="Stenflo J."/>
            <person name="Rigby A.C."/>
        </authorList>
    </citation>
    <scope>STRUCTURE BY NMR</scope>
    <scope>CALCIUM-BINDING</scope>
    <scope>CIS-TRANS ISOMERIZATION</scope>
    <scope>DISULFIDE BOND</scope>
</reference>
<sequence>MGKLTILVLVAAVLLSTQVMVQGDRDQPADRNAVPRDDNPGRARRKRMKVLNESECPWHPWCG</sequence>
<evidence type="ECO:0000255" key="1"/>
<evidence type="ECO:0000256" key="2">
    <source>
        <dbReference type="SAM" id="MobiDB-lite"/>
    </source>
</evidence>
<evidence type="ECO:0000269" key="3">
    <source>
    </source>
</evidence>
<evidence type="ECO:0000269" key="4">
    <source>
    </source>
</evidence>
<evidence type="ECO:0000303" key="5">
    <source>
    </source>
</evidence>
<evidence type="ECO:0000303" key="6">
    <source>
    </source>
</evidence>
<evidence type="ECO:0000305" key="7"/>
<evidence type="ECO:0000305" key="8">
    <source>
    </source>
</evidence>
<keyword id="KW-0027">Amidation</keyword>
<keyword id="KW-0108">Calcium channel impairing toxin</keyword>
<keyword id="KW-0208">D-amino acid</keyword>
<keyword id="KW-0903">Direct protein sequencing</keyword>
<keyword id="KW-1015">Disulfide bond</keyword>
<keyword id="KW-0301">Gamma-carboxyglutamic acid</keyword>
<keyword id="KW-0872">Ion channel impairing toxin</keyword>
<keyword id="KW-0479">Metal-binding</keyword>
<keyword id="KW-0528">Neurotoxin</keyword>
<keyword id="KW-0964">Secreted</keyword>
<keyword id="KW-0732">Signal</keyword>
<keyword id="KW-0800">Toxin</keyword>
<keyword id="KW-1218">Voltage-gated calcium channel impairing toxin</keyword>